<sequence>MFEFLVTTSKGLDELLAQEITKLCPQLSVKTKPGQVLFTGEIEQAYKICLWSRLANRVMLKLADGHVDSADDVYQITSSVNWTSHFSVNSTFVVDFVGASHCINNSQFGALKIKDAVVDQFNELFESRPSVSKIEPDIRIQGRMWSDKLTVYLDLSGSSLHQRHYRTKTGLAPVKEHIACAMLVRSGWANDQQAPLVDPMCGAGTIAIEAALMAANIAPALKRERWGFTRWLQHDATLWQSLLDDANAQIITPNCVISASDIDHGVVSIAKENADAAGVFSGIKFNTIDACKVIPPKGHTKGYIVSNPPYGERLSEITALLPLFQAWGTSLKEHFKGWNLSLLTSNRDLLRSMKMFAHKEYKLMNGKLECQLVNFALDEKNCITRETSLSNNDFANRLNKNIKRLSKWLKSENTNCYRIYDADLPEYNVAIDRYGDWLVVQEYAAPKNVPEAKAKRRLHEVIVALPQVVDVPAEQIVMKVRAQQKGKSQYEKVSQKQKMLEVFENGAKFKLNLTDYLDTGLFLDHRVTRQLVQQRVKDKDVLNLFAYTGSVSVHAALGKAKSVTTVDMSNTYVDWAKENFALNKLKGPYEFIQADCLTWLERHNNQYDFIFIDPPSFSNSKRMDTTWDVQRDHVALLRNAVKCLRPGGEIMFSNNLRQFKLDEEGVSQLGLTIQDITQKTLPEDFKRNPKIHGCWVLTLNA</sequence>
<proteinExistence type="inferred from homology"/>
<accession>Q15UB5</accession>
<evidence type="ECO:0000255" key="1">
    <source>
        <dbReference type="HAMAP-Rule" id="MF_01858"/>
    </source>
</evidence>
<feature type="chain" id="PRO_0000366783" description="Ribosomal RNA large subunit methyltransferase K/L">
    <location>
        <begin position="1"/>
        <end position="701"/>
    </location>
</feature>
<feature type="domain" description="THUMP" evidence="1">
    <location>
        <begin position="44"/>
        <end position="155"/>
    </location>
</feature>
<organism>
    <name type="scientific">Pseudoalteromonas atlantica (strain T6c / ATCC BAA-1087)</name>
    <dbReference type="NCBI Taxonomy" id="3042615"/>
    <lineage>
        <taxon>Bacteria</taxon>
        <taxon>Pseudomonadati</taxon>
        <taxon>Pseudomonadota</taxon>
        <taxon>Gammaproteobacteria</taxon>
        <taxon>Alteromonadales</taxon>
        <taxon>Alteromonadaceae</taxon>
        <taxon>Paraglaciecola</taxon>
    </lineage>
</organism>
<comment type="function">
    <text evidence="1">Specifically methylates the guanine in position 2445 (m2G2445) and the guanine in position 2069 (m7G2069) of 23S rRNA.</text>
</comment>
<comment type="catalytic activity">
    <reaction evidence="1">
        <text>guanosine(2445) in 23S rRNA + S-adenosyl-L-methionine = N(2)-methylguanosine(2445) in 23S rRNA + S-adenosyl-L-homocysteine + H(+)</text>
        <dbReference type="Rhea" id="RHEA:42740"/>
        <dbReference type="Rhea" id="RHEA-COMP:10215"/>
        <dbReference type="Rhea" id="RHEA-COMP:10216"/>
        <dbReference type="ChEBI" id="CHEBI:15378"/>
        <dbReference type="ChEBI" id="CHEBI:57856"/>
        <dbReference type="ChEBI" id="CHEBI:59789"/>
        <dbReference type="ChEBI" id="CHEBI:74269"/>
        <dbReference type="ChEBI" id="CHEBI:74481"/>
        <dbReference type="EC" id="2.1.1.173"/>
    </reaction>
</comment>
<comment type="catalytic activity">
    <reaction evidence="1">
        <text>guanosine(2069) in 23S rRNA + S-adenosyl-L-methionine = N(2)-methylguanosine(2069) in 23S rRNA + S-adenosyl-L-homocysteine + H(+)</text>
        <dbReference type="Rhea" id="RHEA:43772"/>
        <dbReference type="Rhea" id="RHEA-COMP:10688"/>
        <dbReference type="Rhea" id="RHEA-COMP:10689"/>
        <dbReference type="ChEBI" id="CHEBI:15378"/>
        <dbReference type="ChEBI" id="CHEBI:57856"/>
        <dbReference type="ChEBI" id="CHEBI:59789"/>
        <dbReference type="ChEBI" id="CHEBI:74269"/>
        <dbReference type="ChEBI" id="CHEBI:74481"/>
        <dbReference type="EC" id="2.1.1.264"/>
    </reaction>
</comment>
<comment type="subcellular location">
    <subcellularLocation>
        <location evidence="1">Cytoplasm</location>
    </subcellularLocation>
</comment>
<comment type="similarity">
    <text evidence="1">Belongs to the methyltransferase superfamily. RlmKL family.</text>
</comment>
<reference key="1">
    <citation type="submission" date="2006-06" db="EMBL/GenBank/DDBJ databases">
        <title>Complete sequence of Pseudoalteromonas atlantica T6c.</title>
        <authorList>
            <consortium name="US DOE Joint Genome Institute"/>
            <person name="Copeland A."/>
            <person name="Lucas S."/>
            <person name="Lapidus A."/>
            <person name="Barry K."/>
            <person name="Detter J.C."/>
            <person name="Glavina del Rio T."/>
            <person name="Hammon N."/>
            <person name="Israni S."/>
            <person name="Dalin E."/>
            <person name="Tice H."/>
            <person name="Pitluck S."/>
            <person name="Saunders E."/>
            <person name="Brettin T."/>
            <person name="Bruce D."/>
            <person name="Han C."/>
            <person name="Tapia R."/>
            <person name="Gilna P."/>
            <person name="Schmutz J."/>
            <person name="Larimer F."/>
            <person name="Land M."/>
            <person name="Hauser L."/>
            <person name="Kyrpides N."/>
            <person name="Kim E."/>
            <person name="Karls A.C."/>
            <person name="Bartlett D."/>
            <person name="Higgins B.P."/>
            <person name="Richardson P."/>
        </authorList>
    </citation>
    <scope>NUCLEOTIDE SEQUENCE [LARGE SCALE GENOMIC DNA]</scope>
    <source>
        <strain>T6c / ATCC BAA-1087</strain>
    </source>
</reference>
<protein>
    <recommendedName>
        <fullName evidence="1">Ribosomal RNA large subunit methyltransferase K/L</fullName>
    </recommendedName>
    <domain>
        <recommendedName>
            <fullName evidence="1">23S rRNA m2G2445 methyltransferase</fullName>
            <ecNumber evidence="1">2.1.1.173</ecNumber>
        </recommendedName>
        <alternativeName>
            <fullName evidence="1">rRNA (guanine-N(2)-)-methyltransferase RlmL</fullName>
        </alternativeName>
    </domain>
    <domain>
        <recommendedName>
            <fullName evidence="1">23S rRNA m7G2069 methyltransferase</fullName>
            <ecNumber evidence="1">2.1.1.264</ecNumber>
        </recommendedName>
        <alternativeName>
            <fullName evidence="1">rRNA (guanine-N(7)-)-methyltransferase RlmK</fullName>
        </alternativeName>
    </domain>
</protein>
<name>RLMKL_PSEA6</name>
<gene>
    <name evidence="1" type="primary">rlmL</name>
    <name type="ordered locus">Patl_2005</name>
</gene>
<keyword id="KW-0963">Cytoplasm</keyword>
<keyword id="KW-0489">Methyltransferase</keyword>
<keyword id="KW-0694">RNA-binding</keyword>
<keyword id="KW-0698">rRNA processing</keyword>
<keyword id="KW-0949">S-adenosyl-L-methionine</keyword>
<keyword id="KW-0808">Transferase</keyword>
<dbReference type="EC" id="2.1.1.173" evidence="1"/>
<dbReference type="EC" id="2.1.1.264" evidence="1"/>
<dbReference type="EMBL" id="CP000388">
    <property type="protein sequence ID" value="ABG40523.1"/>
    <property type="molecule type" value="Genomic_DNA"/>
</dbReference>
<dbReference type="RefSeq" id="WP_011574816.1">
    <property type="nucleotide sequence ID" value="NC_008228.1"/>
</dbReference>
<dbReference type="SMR" id="Q15UB5"/>
<dbReference type="STRING" id="342610.Patl_2005"/>
<dbReference type="KEGG" id="pat:Patl_2005"/>
<dbReference type="eggNOG" id="COG0116">
    <property type="taxonomic scope" value="Bacteria"/>
</dbReference>
<dbReference type="eggNOG" id="COG1092">
    <property type="taxonomic scope" value="Bacteria"/>
</dbReference>
<dbReference type="HOGENOM" id="CLU_014042_2_0_6"/>
<dbReference type="OrthoDB" id="9809404at2"/>
<dbReference type="Proteomes" id="UP000001981">
    <property type="component" value="Chromosome"/>
</dbReference>
<dbReference type="GO" id="GO:0005737">
    <property type="term" value="C:cytoplasm"/>
    <property type="evidence" value="ECO:0007669"/>
    <property type="project" value="UniProtKB-SubCell"/>
</dbReference>
<dbReference type="GO" id="GO:0052915">
    <property type="term" value="F:23S rRNA (guanine(2445)-N(2))-methyltransferase activity"/>
    <property type="evidence" value="ECO:0007669"/>
    <property type="project" value="UniProtKB-UniRule"/>
</dbReference>
<dbReference type="GO" id="GO:0003723">
    <property type="term" value="F:RNA binding"/>
    <property type="evidence" value="ECO:0007669"/>
    <property type="project" value="UniProtKB-KW"/>
</dbReference>
<dbReference type="GO" id="GO:0070043">
    <property type="term" value="F:rRNA (guanine-N7-)-methyltransferase activity"/>
    <property type="evidence" value="ECO:0007669"/>
    <property type="project" value="UniProtKB-UniRule"/>
</dbReference>
<dbReference type="CDD" id="cd02440">
    <property type="entry name" value="AdoMet_MTases"/>
    <property type="match status" value="1"/>
</dbReference>
<dbReference type="CDD" id="cd11715">
    <property type="entry name" value="THUMP_AdoMetMT"/>
    <property type="match status" value="1"/>
</dbReference>
<dbReference type="FunFam" id="3.40.50.150:FF:000039">
    <property type="entry name" value="Ribosomal RNA large subunit methyltransferase K/L"/>
    <property type="match status" value="1"/>
</dbReference>
<dbReference type="Gene3D" id="3.30.2130.30">
    <property type="match status" value="1"/>
</dbReference>
<dbReference type="Gene3D" id="3.30.750.80">
    <property type="entry name" value="RNA methyltransferase domain (HRMD) like"/>
    <property type="match status" value="1"/>
</dbReference>
<dbReference type="Gene3D" id="3.40.50.150">
    <property type="entry name" value="Vaccinia Virus protein VP39"/>
    <property type="match status" value="2"/>
</dbReference>
<dbReference type="HAMAP" id="MF_01858">
    <property type="entry name" value="23SrRNA_methyltr_KL"/>
    <property type="match status" value="1"/>
</dbReference>
<dbReference type="InterPro" id="IPR017244">
    <property type="entry name" value="23SrRNA_methyltr_KL"/>
</dbReference>
<dbReference type="InterPro" id="IPR002052">
    <property type="entry name" value="DNA_methylase_N6_adenine_CS"/>
</dbReference>
<dbReference type="InterPro" id="IPR000241">
    <property type="entry name" value="RlmKL-like_Mtase"/>
</dbReference>
<dbReference type="InterPro" id="IPR054170">
    <property type="entry name" value="RlmL_1st"/>
</dbReference>
<dbReference type="InterPro" id="IPR019614">
    <property type="entry name" value="SAM-dep_methyl-trfase"/>
</dbReference>
<dbReference type="InterPro" id="IPR029063">
    <property type="entry name" value="SAM-dependent_MTases_sf"/>
</dbReference>
<dbReference type="InterPro" id="IPR004114">
    <property type="entry name" value="THUMP_dom"/>
</dbReference>
<dbReference type="NCBIfam" id="NF008748">
    <property type="entry name" value="PRK11783.1"/>
    <property type="match status" value="1"/>
</dbReference>
<dbReference type="PANTHER" id="PTHR47313">
    <property type="entry name" value="RIBOSOMAL RNA LARGE SUBUNIT METHYLTRANSFERASE K/L"/>
    <property type="match status" value="1"/>
</dbReference>
<dbReference type="PANTHER" id="PTHR47313:SF1">
    <property type="entry name" value="RIBOSOMAL RNA LARGE SUBUNIT METHYLTRANSFERASE K_L"/>
    <property type="match status" value="1"/>
</dbReference>
<dbReference type="Pfam" id="PF10672">
    <property type="entry name" value="Methyltrans_SAM"/>
    <property type="match status" value="1"/>
</dbReference>
<dbReference type="Pfam" id="PF22020">
    <property type="entry name" value="RlmL_1st"/>
    <property type="match status" value="1"/>
</dbReference>
<dbReference type="Pfam" id="PF02926">
    <property type="entry name" value="THUMP"/>
    <property type="match status" value="1"/>
</dbReference>
<dbReference type="Pfam" id="PF01170">
    <property type="entry name" value="UPF0020"/>
    <property type="match status" value="1"/>
</dbReference>
<dbReference type="PIRSF" id="PIRSF037618">
    <property type="entry name" value="RNA_Mtase_bacteria_prd"/>
    <property type="match status" value="1"/>
</dbReference>
<dbReference type="SMART" id="SM00981">
    <property type="entry name" value="THUMP"/>
    <property type="match status" value="1"/>
</dbReference>
<dbReference type="SUPFAM" id="SSF53335">
    <property type="entry name" value="S-adenosyl-L-methionine-dependent methyltransferases"/>
    <property type="match status" value="2"/>
</dbReference>
<dbReference type="PROSITE" id="PS51165">
    <property type="entry name" value="THUMP"/>
    <property type="match status" value="1"/>
</dbReference>